<dbReference type="EC" id="1.1.1.122" evidence="4"/>
<dbReference type="EMBL" id="D32042">
    <property type="protein sequence ID" value="BAA06803.1"/>
    <property type="molecule type" value="Genomic_DNA"/>
</dbReference>
<dbReference type="PIR" id="JC2405">
    <property type="entry name" value="JC2405"/>
</dbReference>
<dbReference type="SMR" id="Q52472"/>
<dbReference type="KEGG" id="ag:BAA06803"/>
<dbReference type="GO" id="GO:0005829">
    <property type="term" value="C:cytosol"/>
    <property type="evidence" value="ECO:0007669"/>
    <property type="project" value="TreeGrafter"/>
</dbReference>
<dbReference type="GO" id="GO:0047834">
    <property type="term" value="F:D-threo-aldose 1-dehydrogenase activity"/>
    <property type="evidence" value="ECO:0007669"/>
    <property type="project" value="UniProtKB-EC"/>
</dbReference>
<dbReference type="CDD" id="cd19162">
    <property type="entry name" value="AKR_FDH"/>
    <property type="match status" value="1"/>
</dbReference>
<dbReference type="Gene3D" id="3.20.20.100">
    <property type="entry name" value="NADP-dependent oxidoreductase domain"/>
    <property type="match status" value="1"/>
</dbReference>
<dbReference type="InterPro" id="IPR020471">
    <property type="entry name" value="AKR"/>
</dbReference>
<dbReference type="InterPro" id="IPR044477">
    <property type="entry name" value="FDH-like"/>
</dbReference>
<dbReference type="InterPro" id="IPR023210">
    <property type="entry name" value="NADP_OxRdtase_dom"/>
</dbReference>
<dbReference type="InterPro" id="IPR036812">
    <property type="entry name" value="NADP_OxRdtase_dom_sf"/>
</dbReference>
<dbReference type="PANTHER" id="PTHR42686">
    <property type="entry name" value="GH17980P-RELATED"/>
    <property type="match status" value="1"/>
</dbReference>
<dbReference type="PANTHER" id="PTHR42686:SF1">
    <property type="entry name" value="GH17980P-RELATED"/>
    <property type="match status" value="1"/>
</dbReference>
<dbReference type="Pfam" id="PF00248">
    <property type="entry name" value="Aldo_ket_red"/>
    <property type="match status" value="1"/>
</dbReference>
<dbReference type="SUPFAM" id="SSF51430">
    <property type="entry name" value="NAD(P)-linked oxidoreductase"/>
    <property type="match status" value="1"/>
</dbReference>
<accession>Q52472</accession>
<organism>
    <name type="scientific">Pseudomonas sp</name>
    <dbReference type="NCBI Taxonomy" id="306"/>
    <lineage>
        <taxon>Bacteria</taxon>
        <taxon>Pseudomonadati</taxon>
        <taxon>Pseudomonadota</taxon>
        <taxon>Gammaproteobacteria</taxon>
        <taxon>Pseudomonadales</taxon>
        <taxon>Pseudomonadaceae</taxon>
        <taxon>Pseudomonas</taxon>
    </lineage>
</organism>
<feature type="initiator methionine" description="Removed" evidence="3">
    <location>
        <position position="1"/>
    </location>
</feature>
<feature type="chain" id="PRO_0000413583" description="D-threo-aldose 1-dehydrogenase" evidence="4">
    <location>
        <begin position="2"/>
        <end position="329"/>
    </location>
</feature>
<feature type="active site" description="Proton donor" evidence="1">
    <location>
        <position position="58"/>
    </location>
</feature>
<feature type="binding site" evidence="1">
    <location>
        <position position="145"/>
    </location>
    <ligand>
        <name>substrate</name>
    </ligand>
</feature>
<comment type="function">
    <text evidence="4">Catalyzes the oxidation of L-fucose to L-fuconolactone in the presence of NADP(+). Also active against L-galactose and, to a much lesser degree, D-arabinose. Uses NADP(+) as a hydrogen acceptor much more efficiently than NAD(+).</text>
</comment>
<comment type="catalytic activity">
    <reaction evidence="4">
        <text>a D-threo-aldose + NAD(+) = a D-threo-aldono-1,5-lactone + NADH + H(+)</text>
        <dbReference type="Rhea" id="RHEA:19645"/>
        <dbReference type="ChEBI" id="CHEBI:15378"/>
        <dbReference type="ChEBI" id="CHEBI:27378"/>
        <dbReference type="ChEBI" id="CHEBI:28991"/>
        <dbReference type="ChEBI" id="CHEBI:57540"/>
        <dbReference type="ChEBI" id="CHEBI:57945"/>
        <dbReference type="EC" id="1.1.1.122"/>
    </reaction>
</comment>
<comment type="activity regulation">
    <text evidence="4">Inhibited strongly by Hg(2+), Cd(2+) and para-chloromercuribenzoic acid (PCMB) and weakly by Zn(2+) and iodoacetamide. Also inhibited strongly by L-xylose but not D-glucose.</text>
</comment>
<comment type="biophysicochemical properties">
    <absorption>
        <max evidence="4">280 nm</max>
        <text evidence="4">Exhibits a shoulder at 289 nm, but the characteristic absorption spectrum caused by prosthetic group is not observed.</text>
    </absorption>
    <kinetics>
        <KM evidence="4">1.9 mM for L-fucose (at 37 degrees Celsius)</KM>
        <KM evidence="4">19 mM for L-galactose (at 37 degrees Celsius)</KM>
        <KM evidence="4">300 mM for D-arabinose (at 37 degrees Celsius)</KM>
        <KM evidence="4">0.016 mM for NADP(+) (at 37 degrees Celsius)</KM>
        <KM evidence="4">5.6 mM for NAD(+) (at 37 degrees Celsius)</KM>
        <Vmax evidence="4">426.0 umol/min/mg enzyme toward L-fucose</Vmax>
        <Vmax evidence="4">886.0 umol/min/mg enzyme toward L-galactose</Vmax>
        <Vmax evidence="4">132.0 umol/min/mg enzyme toward D-arabinose</Vmax>
        <Vmax evidence="4">366.0 umol/min/mg enzyme with NADP(+) and L-fucose as substrates</Vmax>
        <Vmax evidence="4">24.9 umol/min/mg enzyme with NAD(+) and L-fucose as substrates</Vmax>
    </kinetics>
    <phDependence>
        <text evidence="4">Optimum pH is 9-10.5.</text>
    </phDependence>
    <temperatureDependence>
        <text evidence="4">Optimum temperature is 37-40 degrees Celsius. Activity decreases at 50 degrees Celsius.</text>
    </temperatureDependence>
</comment>
<comment type="similarity">
    <text evidence="2">Belongs to the aldo/keto reductase family.</text>
</comment>
<gene>
    <name evidence="5" type="primary">fdh</name>
</gene>
<reference evidence="7 8" key="1">
    <citation type="journal article" date="1994" name="Biosci. Biotechnol. Biochem.">
        <title>Cloning and sequencing of the L-fucose dehydrogenase gene from Pseudomonas sp. No. 1143.</title>
        <authorList>
            <person name="Yamamoto-Otake H."/>
            <person name="Nakano E."/>
            <person name="Koyama Y."/>
        </authorList>
    </citation>
    <scope>NUCLEOTIDE SEQUENCE [GENOMIC DNA]</scope>
    <scope>PROTEIN SEQUENCE OF 2-31; 147-171; 181-195 AND 199-214</scope>
    <source>
        <strain evidence="3">No. 1143</strain>
    </source>
</reference>
<reference evidence="7" key="2">
    <citation type="journal article" date="1989" name="Agric. Biol. Chem.">
        <title>Purification and characterization of L-fucose (L-galactose) dehydrogenase from Pseudomonas sp. No. 1143.</title>
        <authorList>
            <person name="Horiuchi T."/>
            <person name="Suzuki T."/>
            <person name="Hiruma M."/>
            <person name="Saito N."/>
        </authorList>
    </citation>
    <scope>FUNCTION</scope>
    <scope>CATALYTIC ACTIVITY</scope>
    <scope>ACTIVITY REGULATION</scope>
    <scope>BIOPHYSICOCHEMICAL PROPERTIES</scope>
    <source>
        <strain evidence="4">No. 1143</strain>
    </source>
</reference>
<evidence type="ECO:0000250" key="1">
    <source>
        <dbReference type="UniProtKB" id="P06632"/>
    </source>
</evidence>
<evidence type="ECO:0000255" key="2"/>
<evidence type="ECO:0000269" key="3">
    <source>
    </source>
</evidence>
<evidence type="ECO:0000269" key="4">
    <source ref="2"/>
</evidence>
<evidence type="ECO:0000303" key="5">
    <source>
    </source>
</evidence>
<evidence type="ECO:0000303" key="6">
    <source ref="2"/>
</evidence>
<evidence type="ECO:0000305" key="7"/>
<evidence type="ECO:0000312" key="8">
    <source>
        <dbReference type="EMBL" id="BAA06803.1"/>
    </source>
</evidence>
<proteinExistence type="evidence at protein level"/>
<sequence>MSSTEPAAAAAGLAIPALGYGAANVGNLFRALSDDEAWAVLEAAWDAGIRYYDTAPHYGLGLSEKRLGAFLQTKPRDEFVVSTKAGRLLRPNPERRPSGLDTDNDFHVPDDLRREWDFTEQGIRASIAESQERLGLDRIDLLYLHDPERHDLDLALASAFPALEKVRAEGVVKAIGIGSMVSDALTRAVREADLDLIMVAGRYTLLEQPAATEVLPACAENATGIVAASVFNSGLLAQSEPKRDGRYEYGQLPDELWDRLVRIAAICRNHDVPLPAAAIQFPLQSALVRSVVVGGSRPAQLTQNAEYAALEIPAGLWAELAEARLIPTP</sequence>
<keyword id="KW-0903">Direct protein sequencing</keyword>
<keyword id="KW-0520">NAD</keyword>
<keyword id="KW-0521">NADP</keyword>
<keyword id="KW-0560">Oxidoreductase</keyword>
<protein>
    <recommendedName>
        <fullName evidence="6">D-threo-aldose 1-dehydrogenase</fullName>
        <ecNumber evidence="4">1.1.1.122</ecNumber>
    </recommendedName>
    <alternativeName>
        <fullName evidence="8">L-fucose dehydrogenase</fullName>
    </alternativeName>
</protein>
<name>FCDH_PSESP</name>